<proteinExistence type="inferred from homology"/>
<organism>
    <name type="scientific">Yersinia enterocolitica serotype O:8 / biotype 1B (strain NCTC 13174 / 8081)</name>
    <dbReference type="NCBI Taxonomy" id="393305"/>
    <lineage>
        <taxon>Bacteria</taxon>
        <taxon>Pseudomonadati</taxon>
        <taxon>Pseudomonadota</taxon>
        <taxon>Gammaproteobacteria</taxon>
        <taxon>Enterobacterales</taxon>
        <taxon>Yersiniaceae</taxon>
        <taxon>Yersinia</taxon>
    </lineage>
</organism>
<feature type="chain" id="PRO_1000062534" description="Protein-export protein SecB">
    <location>
        <begin position="1"/>
        <end position="156"/>
    </location>
</feature>
<gene>
    <name evidence="1" type="primary">secB</name>
    <name type="ordered locus">YE0080</name>
</gene>
<protein>
    <recommendedName>
        <fullName evidence="1">Protein-export protein SecB</fullName>
    </recommendedName>
</protein>
<sequence>MSEQNNTEMAFQIQRIYTKDISFEAPNAPQVFQQDWQPEVKLDLDTASSQLAEDVYEVVLRVTVTASLGEETAFLCEVQQGGIFSIAGIDGTQLAHCLGAYCPNILFPYARECITSLVSRGTFPQLNLAPVNFDALFMNYLQQQAEGEGAEQRQDA</sequence>
<comment type="function">
    <text evidence="1">One of the proteins required for the normal export of preproteins out of the cell cytoplasm. It is a molecular chaperone that binds to a subset of precursor proteins, maintaining them in a translocation-competent state. It also specifically binds to its receptor SecA.</text>
</comment>
<comment type="subunit">
    <text evidence="1">Homotetramer, a dimer of dimers. One homotetramer interacts with 1 SecA dimer.</text>
</comment>
<comment type="subcellular location">
    <subcellularLocation>
        <location evidence="1">Cytoplasm</location>
    </subcellularLocation>
</comment>
<comment type="similarity">
    <text evidence="1">Belongs to the SecB family.</text>
</comment>
<evidence type="ECO:0000255" key="1">
    <source>
        <dbReference type="HAMAP-Rule" id="MF_00821"/>
    </source>
</evidence>
<accession>A1JHY4</accession>
<name>SECB_YERE8</name>
<keyword id="KW-0143">Chaperone</keyword>
<keyword id="KW-0963">Cytoplasm</keyword>
<keyword id="KW-0653">Protein transport</keyword>
<keyword id="KW-0811">Translocation</keyword>
<keyword id="KW-0813">Transport</keyword>
<reference key="1">
    <citation type="journal article" date="2006" name="PLoS Genet.">
        <title>The complete genome sequence and comparative genome analysis of the high pathogenicity Yersinia enterocolitica strain 8081.</title>
        <authorList>
            <person name="Thomson N.R."/>
            <person name="Howard S."/>
            <person name="Wren B.W."/>
            <person name="Holden M.T.G."/>
            <person name="Crossman L."/>
            <person name="Challis G.L."/>
            <person name="Churcher C."/>
            <person name="Mungall K."/>
            <person name="Brooks K."/>
            <person name="Chillingworth T."/>
            <person name="Feltwell T."/>
            <person name="Abdellah Z."/>
            <person name="Hauser H."/>
            <person name="Jagels K."/>
            <person name="Maddison M."/>
            <person name="Moule S."/>
            <person name="Sanders M."/>
            <person name="Whitehead S."/>
            <person name="Quail M.A."/>
            <person name="Dougan G."/>
            <person name="Parkhill J."/>
            <person name="Prentice M.B."/>
        </authorList>
    </citation>
    <scope>NUCLEOTIDE SEQUENCE [LARGE SCALE GENOMIC DNA]</scope>
    <source>
        <strain>NCTC 13174 / 8081</strain>
    </source>
</reference>
<dbReference type="EMBL" id="AM286415">
    <property type="protein sequence ID" value="CAL10222.1"/>
    <property type="molecule type" value="Genomic_DNA"/>
</dbReference>
<dbReference type="RefSeq" id="WP_005164715.1">
    <property type="nucleotide sequence ID" value="NC_008800.1"/>
</dbReference>
<dbReference type="RefSeq" id="YP_001004474.1">
    <property type="nucleotide sequence ID" value="NC_008800.1"/>
</dbReference>
<dbReference type="SMR" id="A1JHY4"/>
<dbReference type="GeneID" id="93973006"/>
<dbReference type="KEGG" id="yen:YE0080"/>
<dbReference type="PATRIC" id="fig|393305.7.peg.169"/>
<dbReference type="eggNOG" id="COG1952">
    <property type="taxonomic scope" value="Bacteria"/>
</dbReference>
<dbReference type="HOGENOM" id="CLU_111574_1_0_6"/>
<dbReference type="OrthoDB" id="9795145at2"/>
<dbReference type="Proteomes" id="UP000000642">
    <property type="component" value="Chromosome"/>
</dbReference>
<dbReference type="GO" id="GO:0005737">
    <property type="term" value="C:cytoplasm"/>
    <property type="evidence" value="ECO:0007669"/>
    <property type="project" value="UniProtKB-SubCell"/>
</dbReference>
<dbReference type="GO" id="GO:0051082">
    <property type="term" value="F:unfolded protein binding"/>
    <property type="evidence" value="ECO:0007669"/>
    <property type="project" value="InterPro"/>
</dbReference>
<dbReference type="GO" id="GO:0006457">
    <property type="term" value="P:protein folding"/>
    <property type="evidence" value="ECO:0007669"/>
    <property type="project" value="UniProtKB-UniRule"/>
</dbReference>
<dbReference type="GO" id="GO:0051262">
    <property type="term" value="P:protein tetramerization"/>
    <property type="evidence" value="ECO:0007669"/>
    <property type="project" value="InterPro"/>
</dbReference>
<dbReference type="GO" id="GO:0015031">
    <property type="term" value="P:protein transport"/>
    <property type="evidence" value="ECO:0007669"/>
    <property type="project" value="UniProtKB-UniRule"/>
</dbReference>
<dbReference type="CDD" id="cd00557">
    <property type="entry name" value="Translocase_SecB"/>
    <property type="match status" value="1"/>
</dbReference>
<dbReference type="FunFam" id="3.10.420.10:FF:000001">
    <property type="entry name" value="Protein-export chaperone SecB"/>
    <property type="match status" value="1"/>
</dbReference>
<dbReference type="Gene3D" id="3.10.420.10">
    <property type="entry name" value="SecB-like"/>
    <property type="match status" value="1"/>
</dbReference>
<dbReference type="HAMAP" id="MF_00821">
    <property type="entry name" value="SecB"/>
    <property type="match status" value="1"/>
</dbReference>
<dbReference type="InterPro" id="IPR003708">
    <property type="entry name" value="SecB"/>
</dbReference>
<dbReference type="InterPro" id="IPR035958">
    <property type="entry name" value="SecB-like_sf"/>
</dbReference>
<dbReference type="NCBIfam" id="NF004390">
    <property type="entry name" value="PRK05751.1-1"/>
    <property type="match status" value="1"/>
</dbReference>
<dbReference type="NCBIfam" id="NF004393">
    <property type="entry name" value="PRK05751.1-4"/>
    <property type="match status" value="1"/>
</dbReference>
<dbReference type="NCBIfam" id="TIGR00809">
    <property type="entry name" value="secB"/>
    <property type="match status" value="1"/>
</dbReference>
<dbReference type="PANTHER" id="PTHR36918">
    <property type="match status" value="1"/>
</dbReference>
<dbReference type="PANTHER" id="PTHR36918:SF1">
    <property type="entry name" value="PROTEIN-EXPORT PROTEIN SECB"/>
    <property type="match status" value="1"/>
</dbReference>
<dbReference type="Pfam" id="PF02556">
    <property type="entry name" value="SecB"/>
    <property type="match status" value="1"/>
</dbReference>
<dbReference type="PRINTS" id="PR01594">
    <property type="entry name" value="SECBCHAPRONE"/>
</dbReference>
<dbReference type="SUPFAM" id="SSF54611">
    <property type="entry name" value="SecB-like"/>
    <property type="match status" value="1"/>
</dbReference>